<feature type="chain" id="PRO_1000144794" description="Hydroxyacylglutathione hydrolase">
    <location>
        <begin position="1"/>
        <end position="251"/>
    </location>
</feature>
<feature type="binding site" evidence="1">
    <location>
        <position position="53"/>
    </location>
    <ligand>
        <name>Zn(2+)</name>
        <dbReference type="ChEBI" id="CHEBI:29105"/>
        <label>1</label>
    </ligand>
</feature>
<feature type="binding site" evidence="1">
    <location>
        <position position="55"/>
    </location>
    <ligand>
        <name>Zn(2+)</name>
        <dbReference type="ChEBI" id="CHEBI:29105"/>
        <label>1</label>
    </ligand>
</feature>
<feature type="binding site" evidence="1">
    <location>
        <position position="57"/>
    </location>
    <ligand>
        <name>Zn(2+)</name>
        <dbReference type="ChEBI" id="CHEBI:29105"/>
        <label>2</label>
    </ligand>
</feature>
<feature type="binding site" evidence="1">
    <location>
        <position position="58"/>
    </location>
    <ligand>
        <name>Zn(2+)</name>
        <dbReference type="ChEBI" id="CHEBI:29105"/>
        <label>2</label>
    </ligand>
</feature>
<feature type="binding site" evidence="1">
    <location>
        <position position="110"/>
    </location>
    <ligand>
        <name>Zn(2+)</name>
        <dbReference type="ChEBI" id="CHEBI:29105"/>
        <label>1</label>
    </ligand>
</feature>
<feature type="binding site" evidence="1">
    <location>
        <position position="127"/>
    </location>
    <ligand>
        <name>Zn(2+)</name>
        <dbReference type="ChEBI" id="CHEBI:29105"/>
        <label>1</label>
    </ligand>
</feature>
<feature type="binding site" evidence="1">
    <location>
        <position position="127"/>
    </location>
    <ligand>
        <name>Zn(2+)</name>
        <dbReference type="ChEBI" id="CHEBI:29105"/>
        <label>2</label>
    </ligand>
</feature>
<feature type="binding site" evidence="1">
    <location>
        <position position="165"/>
    </location>
    <ligand>
        <name>Zn(2+)</name>
        <dbReference type="ChEBI" id="CHEBI:29105"/>
        <label>2</label>
    </ligand>
</feature>
<protein>
    <recommendedName>
        <fullName evidence="1">Hydroxyacylglutathione hydrolase</fullName>
        <ecNumber evidence="1">3.1.2.6</ecNumber>
    </recommendedName>
    <alternativeName>
        <fullName evidence="1">Glyoxalase II</fullName>
        <shortName evidence="1">Glx II</shortName>
    </alternativeName>
</protein>
<reference key="1">
    <citation type="journal article" date="2011" name="J. Bacteriol.">
        <title>Comparative genomics of 28 Salmonella enterica isolates: evidence for CRISPR-mediated adaptive sublineage evolution.</title>
        <authorList>
            <person name="Fricke W.F."/>
            <person name="Mammel M.K."/>
            <person name="McDermott P.F."/>
            <person name="Tartera C."/>
            <person name="White D.G."/>
            <person name="Leclerc J.E."/>
            <person name="Ravel J."/>
            <person name="Cebula T.A."/>
        </authorList>
    </citation>
    <scope>NUCLEOTIDE SEQUENCE [LARGE SCALE GENOMIC DNA]</scope>
    <source>
        <strain>SL483</strain>
    </source>
</reference>
<organism>
    <name type="scientific">Salmonella agona (strain SL483)</name>
    <dbReference type="NCBI Taxonomy" id="454166"/>
    <lineage>
        <taxon>Bacteria</taxon>
        <taxon>Pseudomonadati</taxon>
        <taxon>Pseudomonadota</taxon>
        <taxon>Gammaproteobacteria</taxon>
        <taxon>Enterobacterales</taxon>
        <taxon>Enterobacteriaceae</taxon>
        <taxon>Salmonella</taxon>
    </lineage>
</organism>
<accession>B5F8X0</accession>
<dbReference type="EC" id="3.1.2.6" evidence="1"/>
<dbReference type="EMBL" id="CP001138">
    <property type="protein sequence ID" value="ACH49380.1"/>
    <property type="molecule type" value="Genomic_DNA"/>
</dbReference>
<dbReference type="RefSeq" id="WP_001052773.1">
    <property type="nucleotide sequence ID" value="NC_011149.1"/>
</dbReference>
<dbReference type="SMR" id="B5F8X0"/>
<dbReference type="KEGG" id="sea:SeAg_B0305"/>
<dbReference type="HOGENOM" id="CLU_030571_4_1_6"/>
<dbReference type="UniPathway" id="UPA00619">
    <property type="reaction ID" value="UER00676"/>
</dbReference>
<dbReference type="Proteomes" id="UP000008819">
    <property type="component" value="Chromosome"/>
</dbReference>
<dbReference type="GO" id="GO:0004416">
    <property type="term" value="F:hydroxyacylglutathione hydrolase activity"/>
    <property type="evidence" value="ECO:0007669"/>
    <property type="project" value="UniProtKB-UniRule"/>
</dbReference>
<dbReference type="GO" id="GO:0046872">
    <property type="term" value="F:metal ion binding"/>
    <property type="evidence" value="ECO:0007669"/>
    <property type="project" value="UniProtKB-KW"/>
</dbReference>
<dbReference type="GO" id="GO:0019243">
    <property type="term" value="P:methylglyoxal catabolic process to D-lactate via S-lactoyl-glutathione"/>
    <property type="evidence" value="ECO:0007669"/>
    <property type="project" value="InterPro"/>
</dbReference>
<dbReference type="CDD" id="cd07723">
    <property type="entry name" value="hydroxyacylglutathione_hydrolase_MBL-fold"/>
    <property type="match status" value="1"/>
</dbReference>
<dbReference type="Gene3D" id="3.60.15.10">
    <property type="entry name" value="Ribonuclease Z/Hydroxyacylglutathione hydrolase-like"/>
    <property type="match status" value="1"/>
</dbReference>
<dbReference type="HAMAP" id="MF_01374">
    <property type="entry name" value="Glyoxalase_2"/>
    <property type="match status" value="1"/>
</dbReference>
<dbReference type="InterPro" id="IPR035680">
    <property type="entry name" value="Clx_II_MBL"/>
</dbReference>
<dbReference type="InterPro" id="IPR050110">
    <property type="entry name" value="Glyoxalase_II_hydrolase"/>
</dbReference>
<dbReference type="InterPro" id="IPR032282">
    <property type="entry name" value="HAGH_C"/>
</dbReference>
<dbReference type="InterPro" id="IPR017782">
    <property type="entry name" value="Hydroxyacylglutathione_Hdrlase"/>
</dbReference>
<dbReference type="InterPro" id="IPR001279">
    <property type="entry name" value="Metallo-B-lactamas"/>
</dbReference>
<dbReference type="InterPro" id="IPR036866">
    <property type="entry name" value="RibonucZ/Hydroxyglut_hydro"/>
</dbReference>
<dbReference type="NCBIfam" id="TIGR03413">
    <property type="entry name" value="GSH_gloB"/>
    <property type="match status" value="1"/>
</dbReference>
<dbReference type="NCBIfam" id="NF007597">
    <property type="entry name" value="PRK10241.1"/>
    <property type="match status" value="1"/>
</dbReference>
<dbReference type="PANTHER" id="PTHR43705">
    <property type="entry name" value="HYDROXYACYLGLUTATHIONE HYDROLASE"/>
    <property type="match status" value="1"/>
</dbReference>
<dbReference type="PANTHER" id="PTHR43705:SF1">
    <property type="entry name" value="HYDROXYACYLGLUTATHIONE HYDROLASE GLOB"/>
    <property type="match status" value="1"/>
</dbReference>
<dbReference type="Pfam" id="PF16123">
    <property type="entry name" value="HAGH_C"/>
    <property type="match status" value="1"/>
</dbReference>
<dbReference type="Pfam" id="PF00753">
    <property type="entry name" value="Lactamase_B"/>
    <property type="match status" value="1"/>
</dbReference>
<dbReference type="PIRSF" id="PIRSF005457">
    <property type="entry name" value="Glx"/>
    <property type="match status" value="1"/>
</dbReference>
<dbReference type="SMART" id="SM00849">
    <property type="entry name" value="Lactamase_B"/>
    <property type="match status" value="1"/>
</dbReference>
<dbReference type="SUPFAM" id="SSF56281">
    <property type="entry name" value="Metallo-hydrolase/oxidoreductase"/>
    <property type="match status" value="1"/>
</dbReference>
<name>GLO2_SALA4</name>
<comment type="function">
    <text evidence="1">Thiolesterase that catalyzes the hydrolysis of S-D-lactoyl-glutathione to form glutathione and D-lactic acid.</text>
</comment>
<comment type="catalytic activity">
    <reaction evidence="1">
        <text>an S-(2-hydroxyacyl)glutathione + H2O = a 2-hydroxy carboxylate + glutathione + H(+)</text>
        <dbReference type="Rhea" id="RHEA:21864"/>
        <dbReference type="ChEBI" id="CHEBI:15377"/>
        <dbReference type="ChEBI" id="CHEBI:15378"/>
        <dbReference type="ChEBI" id="CHEBI:57925"/>
        <dbReference type="ChEBI" id="CHEBI:58896"/>
        <dbReference type="ChEBI" id="CHEBI:71261"/>
        <dbReference type="EC" id="3.1.2.6"/>
    </reaction>
</comment>
<comment type="cofactor">
    <cofactor evidence="1">
        <name>Zn(2+)</name>
        <dbReference type="ChEBI" id="CHEBI:29105"/>
    </cofactor>
    <text evidence="1">Binds 2 Zn(2+) ions per subunit.</text>
</comment>
<comment type="pathway">
    <text evidence="1">Secondary metabolite metabolism; methylglyoxal degradation; (R)-lactate from methylglyoxal: step 2/2.</text>
</comment>
<comment type="subunit">
    <text evidence="1">Monomer.</text>
</comment>
<comment type="similarity">
    <text evidence="1">Belongs to the metallo-beta-lactamase superfamily. Glyoxalase II family.</text>
</comment>
<evidence type="ECO:0000255" key="1">
    <source>
        <dbReference type="HAMAP-Rule" id="MF_01374"/>
    </source>
</evidence>
<keyword id="KW-0378">Hydrolase</keyword>
<keyword id="KW-0479">Metal-binding</keyword>
<keyword id="KW-0862">Zinc</keyword>
<gene>
    <name evidence="1" type="primary">gloB</name>
    <name type="ordered locus">SeAg_B0305</name>
</gene>
<sequence>MNLNSIPAFQDNYIWVLTNDEGRCVIVDPGEAAPVLKAIAEHKWMPEAIFLTHHHHDHVGGVKELLQHFPQMTVYGPAETQDKGATHLVGDGDTIRVLGEKFTLFATPGHTLGHVCYFSHPYLFCGDTLFSGGCGRLFEGTPSQMYQSLMKINSLPDDTLICCAHEYTLANIKFALSILPHDSFINEYYRKVKELRVKKQMTLPVILKNERKINLFLRTEDIDLINEINKETILQQPEARFAWLRSKKDTF</sequence>
<proteinExistence type="inferred from homology"/>